<protein>
    <recommendedName>
        <fullName>TPR repeat-containing thioredoxin TTL4</fullName>
    </recommendedName>
    <alternativeName>
        <fullName>Tetratricopeptide repeat thioredoxin-like 4</fullName>
    </alternativeName>
</protein>
<keyword id="KW-0597">Phosphoprotein</keyword>
<keyword id="KW-1185">Reference proteome</keyword>
<keyword id="KW-0677">Repeat</keyword>
<keyword id="KW-0346">Stress response</keyword>
<keyword id="KW-0802">TPR repeat</keyword>
<dbReference type="EMBL" id="AL137082">
    <property type="protein sequence ID" value="CAB68200.1"/>
    <property type="status" value="ALT_SEQ"/>
    <property type="molecule type" value="Genomic_DNA"/>
</dbReference>
<dbReference type="EMBL" id="CP002686">
    <property type="protein sequence ID" value="AEE79807.1"/>
    <property type="molecule type" value="Genomic_DNA"/>
</dbReference>
<dbReference type="EMBL" id="BT003919">
    <property type="protein sequence ID" value="AAO41966.1"/>
    <property type="molecule type" value="mRNA"/>
</dbReference>
<dbReference type="EMBL" id="BT005006">
    <property type="protein sequence ID" value="AAO50539.1"/>
    <property type="molecule type" value="mRNA"/>
</dbReference>
<dbReference type="PIR" id="T45682">
    <property type="entry name" value="T45682"/>
</dbReference>
<dbReference type="RefSeq" id="NP_191421.2">
    <property type="nucleotide sequence ID" value="NM_115724.4"/>
</dbReference>
<dbReference type="SMR" id="Q84JR9"/>
<dbReference type="STRING" id="3702.Q84JR9"/>
<dbReference type="GlyGen" id="Q84JR9">
    <property type="glycosylation" value="1 site"/>
</dbReference>
<dbReference type="iPTMnet" id="Q84JR9"/>
<dbReference type="PaxDb" id="3702-AT3G58620.1"/>
<dbReference type="ProteomicsDB" id="232368"/>
<dbReference type="EnsemblPlants" id="AT3G58620.1">
    <property type="protein sequence ID" value="AT3G58620.1"/>
    <property type="gene ID" value="AT3G58620"/>
</dbReference>
<dbReference type="GeneID" id="825031"/>
<dbReference type="Gramene" id="AT3G58620.1">
    <property type="protein sequence ID" value="AT3G58620.1"/>
    <property type="gene ID" value="AT3G58620"/>
</dbReference>
<dbReference type="KEGG" id="ath:AT3G58620"/>
<dbReference type="Araport" id="AT3G58620"/>
<dbReference type="TAIR" id="AT3G58620">
    <property type="gene designation" value="TTL4"/>
</dbReference>
<dbReference type="eggNOG" id="KOG0907">
    <property type="taxonomic scope" value="Eukaryota"/>
</dbReference>
<dbReference type="eggNOG" id="KOG1124">
    <property type="taxonomic scope" value="Eukaryota"/>
</dbReference>
<dbReference type="HOGENOM" id="CLU_015299_0_0_1"/>
<dbReference type="InParanoid" id="Q84JR9"/>
<dbReference type="OrthoDB" id="2121326at2759"/>
<dbReference type="PhylomeDB" id="Q84JR9"/>
<dbReference type="PRO" id="PR:Q84JR9"/>
<dbReference type="Proteomes" id="UP000006548">
    <property type="component" value="Chromosome 3"/>
</dbReference>
<dbReference type="ExpressionAtlas" id="Q84JR9">
    <property type="expression patterns" value="baseline and differential"/>
</dbReference>
<dbReference type="GO" id="GO:0005829">
    <property type="term" value="C:cytosol"/>
    <property type="evidence" value="ECO:0007005"/>
    <property type="project" value="TAIR"/>
</dbReference>
<dbReference type="GO" id="GO:0006970">
    <property type="term" value="P:response to osmotic stress"/>
    <property type="evidence" value="ECO:0000315"/>
    <property type="project" value="TAIR"/>
</dbReference>
<dbReference type="CDD" id="cd02947">
    <property type="entry name" value="TRX_family"/>
    <property type="match status" value="1"/>
</dbReference>
<dbReference type="FunFam" id="1.25.40.10:FF:000534">
    <property type="entry name" value="TPR repeat-containing thioredoxin TTL4"/>
    <property type="match status" value="1"/>
</dbReference>
<dbReference type="FunFam" id="3.40.30.10:FF:000211">
    <property type="entry name" value="TPR repeat-containing thioredoxin TTL4"/>
    <property type="match status" value="1"/>
</dbReference>
<dbReference type="Gene3D" id="3.40.30.10">
    <property type="entry name" value="Glutaredoxin"/>
    <property type="match status" value="1"/>
</dbReference>
<dbReference type="Gene3D" id="1.25.40.10">
    <property type="entry name" value="Tetratricopeptide repeat domain"/>
    <property type="match status" value="1"/>
</dbReference>
<dbReference type="InterPro" id="IPR036249">
    <property type="entry name" value="Thioredoxin-like_sf"/>
</dbReference>
<dbReference type="InterPro" id="IPR013766">
    <property type="entry name" value="Thioredoxin_domain"/>
</dbReference>
<dbReference type="InterPro" id="IPR011990">
    <property type="entry name" value="TPR-like_helical_dom_sf"/>
</dbReference>
<dbReference type="InterPro" id="IPR019734">
    <property type="entry name" value="TPR_rpt"/>
</dbReference>
<dbReference type="InterPro" id="IPR044534">
    <property type="entry name" value="TTL1-4"/>
</dbReference>
<dbReference type="PANTHER" id="PTHR46050">
    <property type="entry name" value="TPR REPEAT-CONTAINING THIOREDOXIN"/>
    <property type="match status" value="1"/>
</dbReference>
<dbReference type="PANTHER" id="PTHR46050:SF29">
    <property type="entry name" value="TPR REPEAT-CONTAINING THIOREDOXIN TTL4"/>
    <property type="match status" value="1"/>
</dbReference>
<dbReference type="Pfam" id="PF00085">
    <property type="entry name" value="Thioredoxin"/>
    <property type="match status" value="1"/>
</dbReference>
<dbReference type="Pfam" id="PF00515">
    <property type="entry name" value="TPR_1"/>
    <property type="match status" value="1"/>
</dbReference>
<dbReference type="Pfam" id="PF13432">
    <property type="entry name" value="TPR_16"/>
    <property type="match status" value="1"/>
</dbReference>
<dbReference type="Pfam" id="PF13174">
    <property type="entry name" value="TPR_6"/>
    <property type="match status" value="1"/>
</dbReference>
<dbReference type="SMART" id="SM00028">
    <property type="entry name" value="TPR"/>
    <property type="match status" value="6"/>
</dbReference>
<dbReference type="SUPFAM" id="SSF52833">
    <property type="entry name" value="Thioredoxin-like"/>
    <property type="match status" value="1"/>
</dbReference>
<dbReference type="SUPFAM" id="SSF48452">
    <property type="entry name" value="TPR-like"/>
    <property type="match status" value="1"/>
</dbReference>
<dbReference type="PROSITE" id="PS50005">
    <property type="entry name" value="TPR"/>
    <property type="match status" value="6"/>
</dbReference>
<dbReference type="PROSITE" id="PS50293">
    <property type="entry name" value="TPR_REGION"/>
    <property type="match status" value="1"/>
</dbReference>
<sequence>MSHYRRHSLEPSITSKFRDSLSFQRDDDVINKPDFRELDFGSPLRPRGSSSAAATPAASGSSSSSSGSASGKPAVTSQFARRSHSGELSGLSQTSPVKPGSVNRNLKPGHRRSASAGTPLIYSGLGFSPVNNNNNSSRGGGSGATSPNPGVLPTGNICPSGRILKTGMATRASVRPETLCTGTANYGHGNIIRTGGKVSHATKAAAEMSDSEEVKKAGNVMYRKGNYAEALALYDRAISLSPENPAYRSNRAAALAASGRLEEAVKECLEAVRCDPSYARAHQRLASLYLRLGEAENARRHLCVSGQCPDQADLQRLQTLEKHLRLCTEARKIGDWRTVISEIDAAIANGADSSPQLVACKAEAFLRLHQIKDSDLCISSIPRLDHHHTQPPEKLFGIVCDAYVLCVQAQVDMALGRFENAIVKVERAMTIDHSNSPEVVSVLNNVKNVAKARTRGNELFSSGRYSEASVAYGDGLKLDAFNSVLYCNRAACWFKLGMWEKSVDDCNQALRIQPSYTKALLRRAASYGKLGRWEDAVRDYEVLRKELPGDSEVAESLQRARNALSNKSEEPKYLGFNNEVEEVSTLDKFKTATSLPGISVFHFKSSSNRQSEAISPFVNTLCLRYPLVHFFKVDVEESLALAKAESIKKIPTFKIYKKGEKVKEMVCPSHQLLEDSVTHFLL</sequence>
<organism>
    <name type="scientific">Arabidopsis thaliana</name>
    <name type="common">Mouse-ear cress</name>
    <dbReference type="NCBI Taxonomy" id="3702"/>
    <lineage>
        <taxon>Eukaryota</taxon>
        <taxon>Viridiplantae</taxon>
        <taxon>Streptophyta</taxon>
        <taxon>Embryophyta</taxon>
        <taxon>Tracheophyta</taxon>
        <taxon>Spermatophyta</taxon>
        <taxon>Magnoliopsida</taxon>
        <taxon>eudicotyledons</taxon>
        <taxon>Gunneridae</taxon>
        <taxon>Pentapetalae</taxon>
        <taxon>rosids</taxon>
        <taxon>malvids</taxon>
        <taxon>Brassicales</taxon>
        <taxon>Brassicaceae</taxon>
        <taxon>Camelineae</taxon>
        <taxon>Arabidopsis</taxon>
    </lineage>
</organism>
<feature type="chain" id="PRO_0000415945" description="TPR repeat-containing thioredoxin TTL4">
    <location>
        <begin position="1"/>
        <end position="682"/>
    </location>
</feature>
<feature type="repeat" description="TPR 1">
    <location>
        <begin position="211"/>
        <end position="244"/>
    </location>
</feature>
<feature type="repeat" description="TPR 2">
    <location>
        <begin position="246"/>
        <end position="278"/>
    </location>
</feature>
<feature type="repeat" description="TPR 3">
    <location>
        <begin position="280"/>
        <end position="312"/>
    </location>
</feature>
<feature type="repeat" description="TPR 4">
    <location>
        <begin position="402"/>
        <end position="435"/>
    </location>
</feature>
<feature type="repeat" description="TPR 5">
    <location>
        <begin position="449"/>
        <end position="482"/>
    </location>
</feature>
<feature type="repeat" description="TPR 6">
    <location>
        <begin position="483"/>
        <end position="516"/>
    </location>
</feature>
<feature type="repeat" description="TPR 7">
    <location>
        <begin position="518"/>
        <end position="550"/>
    </location>
</feature>
<feature type="domain" description="Thioredoxin">
    <location>
        <begin position="587"/>
        <end position="674"/>
    </location>
</feature>
<feature type="region of interest" description="Disordered" evidence="2">
    <location>
        <begin position="1"/>
        <end position="120"/>
    </location>
</feature>
<feature type="region of interest" description="Disordered" evidence="2">
    <location>
        <begin position="132"/>
        <end position="157"/>
    </location>
</feature>
<feature type="compositionally biased region" description="Basic and acidic residues" evidence="2">
    <location>
        <begin position="16"/>
        <end position="39"/>
    </location>
</feature>
<feature type="compositionally biased region" description="Low complexity" evidence="2">
    <location>
        <begin position="48"/>
        <end position="71"/>
    </location>
</feature>
<feature type="modified residue" description="Phosphoserine" evidence="1">
    <location>
        <position position="8"/>
    </location>
</feature>
<feature type="modified residue" description="Phosphoserine" evidence="1">
    <location>
        <position position="42"/>
    </location>
</feature>
<comment type="function">
    <text evidence="3">Involved in osmotic and salt stress tolerance. May play a role in the control of meristematic cell size during osmotic stress.</text>
</comment>
<comment type="tissue specificity">
    <text evidence="3">Widely expressed.</text>
</comment>
<comment type="induction">
    <text evidence="3">By salt treatment in cotyledons.</text>
</comment>
<comment type="disruption phenotype">
    <text evidence="3">No visible phenotype under normal growth conditions, but mutant seedlings display increased tolerance to salt stress at moderate NaCl concentrations (120 mM).</text>
</comment>
<comment type="sequence caution" evidence="4">
    <conflict type="erroneous gene model prediction">
        <sequence resource="EMBL-CDS" id="CAB68200"/>
    </conflict>
</comment>
<name>TTL4_ARATH</name>
<evidence type="ECO:0000250" key="1">
    <source>
        <dbReference type="UniProtKB" id="Q9SIN1"/>
    </source>
</evidence>
<evidence type="ECO:0000256" key="2">
    <source>
        <dbReference type="SAM" id="MobiDB-lite"/>
    </source>
</evidence>
<evidence type="ECO:0000269" key="3">
    <source>
    </source>
</evidence>
<evidence type="ECO:0000305" key="4"/>
<reference key="1">
    <citation type="journal article" date="2000" name="Nature">
        <title>Sequence and analysis of chromosome 3 of the plant Arabidopsis thaliana.</title>
        <authorList>
            <person name="Salanoubat M."/>
            <person name="Lemcke K."/>
            <person name="Rieger M."/>
            <person name="Ansorge W."/>
            <person name="Unseld M."/>
            <person name="Fartmann B."/>
            <person name="Valle G."/>
            <person name="Bloecker H."/>
            <person name="Perez-Alonso M."/>
            <person name="Obermaier B."/>
            <person name="Delseny M."/>
            <person name="Boutry M."/>
            <person name="Grivell L.A."/>
            <person name="Mache R."/>
            <person name="Puigdomenech P."/>
            <person name="De Simone V."/>
            <person name="Choisne N."/>
            <person name="Artiguenave F."/>
            <person name="Robert C."/>
            <person name="Brottier P."/>
            <person name="Wincker P."/>
            <person name="Cattolico L."/>
            <person name="Weissenbach J."/>
            <person name="Saurin W."/>
            <person name="Quetier F."/>
            <person name="Schaefer M."/>
            <person name="Mueller-Auer S."/>
            <person name="Gabel C."/>
            <person name="Fuchs M."/>
            <person name="Benes V."/>
            <person name="Wurmbach E."/>
            <person name="Drzonek H."/>
            <person name="Erfle H."/>
            <person name="Jordan N."/>
            <person name="Bangert S."/>
            <person name="Wiedelmann R."/>
            <person name="Kranz H."/>
            <person name="Voss H."/>
            <person name="Holland R."/>
            <person name="Brandt P."/>
            <person name="Nyakatura G."/>
            <person name="Vezzi A."/>
            <person name="D'Angelo M."/>
            <person name="Pallavicini A."/>
            <person name="Toppo S."/>
            <person name="Simionati B."/>
            <person name="Conrad A."/>
            <person name="Hornischer K."/>
            <person name="Kauer G."/>
            <person name="Loehnert T.-H."/>
            <person name="Nordsiek G."/>
            <person name="Reichelt J."/>
            <person name="Scharfe M."/>
            <person name="Schoen O."/>
            <person name="Bargues M."/>
            <person name="Terol J."/>
            <person name="Climent J."/>
            <person name="Navarro P."/>
            <person name="Collado C."/>
            <person name="Perez-Perez A."/>
            <person name="Ottenwaelder B."/>
            <person name="Duchemin D."/>
            <person name="Cooke R."/>
            <person name="Laudie M."/>
            <person name="Berger-Llauro C."/>
            <person name="Purnelle B."/>
            <person name="Masuy D."/>
            <person name="de Haan M."/>
            <person name="Maarse A.C."/>
            <person name="Alcaraz J.-P."/>
            <person name="Cottet A."/>
            <person name="Casacuberta E."/>
            <person name="Monfort A."/>
            <person name="Argiriou A."/>
            <person name="Flores M."/>
            <person name="Liguori R."/>
            <person name="Vitale D."/>
            <person name="Mannhaupt G."/>
            <person name="Haase D."/>
            <person name="Schoof H."/>
            <person name="Rudd S."/>
            <person name="Zaccaria P."/>
            <person name="Mewes H.-W."/>
            <person name="Mayer K.F.X."/>
            <person name="Kaul S."/>
            <person name="Town C.D."/>
            <person name="Koo H.L."/>
            <person name="Tallon L.J."/>
            <person name="Jenkins J."/>
            <person name="Rooney T."/>
            <person name="Rizzo M."/>
            <person name="Walts A."/>
            <person name="Utterback T."/>
            <person name="Fujii C.Y."/>
            <person name="Shea T.P."/>
            <person name="Creasy T.H."/>
            <person name="Haas B."/>
            <person name="Maiti R."/>
            <person name="Wu D."/>
            <person name="Peterson J."/>
            <person name="Van Aken S."/>
            <person name="Pai G."/>
            <person name="Militscher J."/>
            <person name="Sellers P."/>
            <person name="Gill J.E."/>
            <person name="Feldblyum T.V."/>
            <person name="Preuss D."/>
            <person name="Lin X."/>
            <person name="Nierman W.C."/>
            <person name="Salzberg S.L."/>
            <person name="White O."/>
            <person name="Venter J.C."/>
            <person name="Fraser C.M."/>
            <person name="Kaneko T."/>
            <person name="Nakamura Y."/>
            <person name="Sato S."/>
            <person name="Kato T."/>
            <person name="Asamizu E."/>
            <person name="Sasamoto S."/>
            <person name="Kimura T."/>
            <person name="Idesawa K."/>
            <person name="Kawashima K."/>
            <person name="Kishida Y."/>
            <person name="Kiyokawa C."/>
            <person name="Kohara M."/>
            <person name="Matsumoto M."/>
            <person name="Matsuno A."/>
            <person name="Muraki A."/>
            <person name="Nakayama S."/>
            <person name="Nakazaki N."/>
            <person name="Shinpo S."/>
            <person name="Takeuchi C."/>
            <person name="Wada T."/>
            <person name="Watanabe A."/>
            <person name="Yamada M."/>
            <person name="Yasuda M."/>
            <person name="Tabata S."/>
        </authorList>
    </citation>
    <scope>NUCLEOTIDE SEQUENCE [LARGE SCALE GENOMIC DNA]</scope>
    <source>
        <strain>cv. Columbia</strain>
    </source>
</reference>
<reference key="2">
    <citation type="journal article" date="2017" name="Plant J.">
        <title>Araport11: a complete reannotation of the Arabidopsis thaliana reference genome.</title>
        <authorList>
            <person name="Cheng C.Y."/>
            <person name="Krishnakumar V."/>
            <person name="Chan A.P."/>
            <person name="Thibaud-Nissen F."/>
            <person name="Schobel S."/>
            <person name="Town C.D."/>
        </authorList>
    </citation>
    <scope>GENOME REANNOTATION</scope>
    <source>
        <strain>cv. Columbia</strain>
    </source>
</reference>
<reference key="3">
    <citation type="journal article" date="2003" name="Science">
        <title>Empirical analysis of transcriptional activity in the Arabidopsis genome.</title>
        <authorList>
            <person name="Yamada K."/>
            <person name="Lim J."/>
            <person name="Dale J.M."/>
            <person name="Chen H."/>
            <person name="Shinn P."/>
            <person name="Palm C.J."/>
            <person name="Southwick A.M."/>
            <person name="Wu H.C."/>
            <person name="Kim C.J."/>
            <person name="Nguyen M."/>
            <person name="Pham P.K."/>
            <person name="Cheuk R.F."/>
            <person name="Karlin-Newmann G."/>
            <person name="Liu S.X."/>
            <person name="Lam B."/>
            <person name="Sakano H."/>
            <person name="Wu T."/>
            <person name="Yu G."/>
            <person name="Miranda M."/>
            <person name="Quach H.L."/>
            <person name="Tripp M."/>
            <person name="Chang C.H."/>
            <person name="Lee J.M."/>
            <person name="Toriumi M.J."/>
            <person name="Chan M.M."/>
            <person name="Tang C.C."/>
            <person name="Onodera C.S."/>
            <person name="Deng J.M."/>
            <person name="Akiyama K."/>
            <person name="Ansari Y."/>
            <person name="Arakawa T."/>
            <person name="Banh J."/>
            <person name="Banno F."/>
            <person name="Bowser L."/>
            <person name="Brooks S.Y."/>
            <person name="Carninci P."/>
            <person name="Chao Q."/>
            <person name="Choy N."/>
            <person name="Enju A."/>
            <person name="Goldsmith A.D."/>
            <person name="Gurjal M."/>
            <person name="Hansen N.F."/>
            <person name="Hayashizaki Y."/>
            <person name="Johnson-Hopson C."/>
            <person name="Hsuan V.W."/>
            <person name="Iida K."/>
            <person name="Karnes M."/>
            <person name="Khan S."/>
            <person name="Koesema E."/>
            <person name="Ishida J."/>
            <person name="Jiang P.X."/>
            <person name="Jones T."/>
            <person name="Kawai J."/>
            <person name="Kamiya A."/>
            <person name="Meyers C."/>
            <person name="Nakajima M."/>
            <person name="Narusaka M."/>
            <person name="Seki M."/>
            <person name="Sakurai T."/>
            <person name="Satou M."/>
            <person name="Tamse R."/>
            <person name="Vaysberg M."/>
            <person name="Wallender E.K."/>
            <person name="Wong C."/>
            <person name="Yamamura Y."/>
            <person name="Yuan S."/>
            <person name="Shinozaki K."/>
            <person name="Davis R.W."/>
            <person name="Theologis A."/>
            <person name="Ecker J.R."/>
        </authorList>
    </citation>
    <scope>NUCLEOTIDE SEQUENCE [LARGE SCALE MRNA]</scope>
    <source>
        <strain>cv. Columbia</strain>
    </source>
</reference>
<reference key="4">
    <citation type="journal article" date="2006" name="Plant Physiol.">
        <title>The Arabidopsis tetratricopeptide repeat-containing protein TTL1 is required for osmotic stress responses and abscisic acid sensitivity.</title>
        <authorList>
            <person name="Rosado A."/>
            <person name="Schapire A.L."/>
            <person name="Bressan R.A."/>
            <person name="Harfouche A.L."/>
            <person name="Hasegawa P.M."/>
            <person name="Valpuesta V."/>
            <person name="Botella M.A."/>
        </authorList>
    </citation>
    <scope>GENE FAMILY</scope>
</reference>
<reference key="5">
    <citation type="journal article" date="2012" name="Plant Physiol.">
        <title>The Arabidopsis thaliana TETRATRICO PEPTIDE THIOREDOXIN-LIKE gene family is required for osmotic stress tolerance and male sporogenesis.</title>
        <authorList>
            <person name="Lakhssassi N."/>
            <person name="Doblas V.G."/>
            <person name="Rosado A."/>
            <person name="Esteban Del Valle A."/>
            <person name="Pose D."/>
            <person name="Jimenez A.J."/>
            <person name="Castillo A.G."/>
            <person name="Valpuesta V."/>
            <person name="Borsani O."/>
            <person name="Botella M.A."/>
        </authorList>
    </citation>
    <scope>FUNCTION</scope>
    <scope>TISSUE SPECIFICITY</scope>
    <scope>INDUCTION</scope>
    <scope>DISRUPTION PHENOTYPE</scope>
</reference>
<gene>
    <name type="primary">TTL4</name>
    <name type="ordered locus">At3g58620</name>
    <name type="ORF">F14P22.210</name>
</gene>
<accession>Q84JR9</accession>
<accession>Q9M2F5</accession>
<proteinExistence type="evidence at transcript level"/>